<protein>
    <recommendedName>
        <fullName evidence="1">tRNA-cytidine(32) 2-sulfurtransferase</fullName>
        <ecNumber evidence="1">2.8.1.-</ecNumber>
    </recommendedName>
    <alternativeName>
        <fullName evidence="1">Two-thiocytidine biosynthesis protein A</fullName>
    </alternativeName>
    <alternativeName>
        <fullName evidence="1">tRNA 2-thiocytidine biosynthesis protein TtcA</fullName>
    </alternativeName>
</protein>
<proteinExistence type="inferred from homology"/>
<evidence type="ECO:0000255" key="1">
    <source>
        <dbReference type="HAMAP-Rule" id="MF_01850"/>
    </source>
</evidence>
<feature type="chain" id="PRO_0000348800" description="tRNA-cytidine(32) 2-sulfurtransferase">
    <location>
        <begin position="1"/>
        <end position="274"/>
    </location>
</feature>
<feature type="short sequence motif" description="PP-loop motif" evidence="1">
    <location>
        <begin position="40"/>
        <end position="45"/>
    </location>
</feature>
<feature type="binding site" evidence="1">
    <location>
        <position position="115"/>
    </location>
    <ligand>
        <name>[4Fe-4S] cluster</name>
        <dbReference type="ChEBI" id="CHEBI:49883"/>
    </ligand>
</feature>
<feature type="binding site" evidence="1">
    <location>
        <position position="118"/>
    </location>
    <ligand>
        <name>[4Fe-4S] cluster</name>
        <dbReference type="ChEBI" id="CHEBI:49883"/>
    </ligand>
</feature>
<feature type="binding site" evidence="1">
    <location>
        <position position="206"/>
    </location>
    <ligand>
        <name>[4Fe-4S] cluster</name>
        <dbReference type="ChEBI" id="CHEBI:49883"/>
    </ligand>
</feature>
<keyword id="KW-0004">4Fe-4S</keyword>
<keyword id="KW-0067">ATP-binding</keyword>
<keyword id="KW-0963">Cytoplasm</keyword>
<keyword id="KW-0408">Iron</keyword>
<keyword id="KW-0411">Iron-sulfur</keyword>
<keyword id="KW-0460">Magnesium</keyword>
<keyword id="KW-0479">Metal-binding</keyword>
<keyword id="KW-0547">Nucleotide-binding</keyword>
<keyword id="KW-1185">Reference proteome</keyword>
<keyword id="KW-0694">RNA-binding</keyword>
<keyword id="KW-0808">Transferase</keyword>
<keyword id="KW-0819">tRNA processing</keyword>
<keyword id="KW-0820">tRNA-binding</keyword>
<dbReference type="EC" id="2.8.1.-" evidence="1"/>
<dbReference type="EMBL" id="AE015451">
    <property type="protein sequence ID" value="AAN67262.1"/>
    <property type="molecule type" value="Genomic_DNA"/>
</dbReference>
<dbReference type="RefSeq" id="NP_743798.1">
    <property type="nucleotide sequence ID" value="NC_002947.4"/>
</dbReference>
<dbReference type="RefSeq" id="WP_010952702.1">
    <property type="nucleotide sequence ID" value="NZ_CP169744.1"/>
</dbReference>
<dbReference type="SMR" id="Q88MD2"/>
<dbReference type="STRING" id="160488.PP_1641"/>
<dbReference type="PaxDb" id="160488-PP_1641"/>
<dbReference type="GeneID" id="83681881"/>
<dbReference type="KEGG" id="ppu:PP_1641"/>
<dbReference type="PATRIC" id="fig|160488.4.peg.1733"/>
<dbReference type="eggNOG" id="COG0037">
    <property type="taxonomic scope" value="Bacteria"/>
</dbReference>
<dbReference type="HOGENOM" id="CLU_026481_0_0_6"/>
<dbReference type="OrthoDB" id="9801054at2"/>
<dbReference type="PhylomeDB" id="Q88MD2"/>
<dbReference type="BioCyc" id="PPUT160488:G1G01-1739-MONOMER"/>
<dbReference type="Proteomes" id="UP000000556">
    <property type="component" value="Chromosome"/>
</dbReference>
<dbReference type="GO" id="GO:0005737">
    <property type="term" value="C:cytoplasm"/>
    <property type="evidence" value="ECO:0007669"/>
    <property type="project" value="UniProtKB-SubCell"/>
</dbReference>
<dbReference type="GO" id="GO:0051539">
    <property type="term" value="F:4 iron, 4 sulfur cluster binding"/>
    <property type="evidence" value="ECO:0007669"/>
    <property type="project" value="UniProtKB-UniRule"/>
</dbReference>
<dbReference type="GO" id="GO:0005524">
    <property type="term" value="F:ATP binding"/>
    <property type="evidence" value="ECO:0007669"/>
    <property type="project" value="UniProtKB-UniRule"/>
</dbReference>
<dbReference type="GO" id="GO:0000287">
    <property type="term" value="F:magnesium ion binding"/>
    <property type="evidence" value="ECO:0007669"/>
    <property type="project" value="UniProtKB-UniRule"/>
</dbReference>
<dbReference type="GO" id="GO:0016783">
    <property type="term" value="F:sulfurtransferase activity"/>
    <property type="evidence" value="ECO:0007669"/>
    <property type="project" value="UniProtKB-UniRule"/>
</dbReference>
<dbReference type="GO" id="GO:0000049">
    <property type="term" value="F:tRNA binding"/>
    <property type="evidence" value="ECO:0007669"/>
    <property type="project" value="UniProtKB-KW"/>
</dbReference>
<dbReference type="GO" id="GO:0034227">
    <property type="term" value="P:tRNA thio-modification"/>
    <property type="evidence" value="ECO:0007669"/>
    <property type="project" value="UniProtKB-UniRule"/>
</dbReference>
<dbReference type="CDD" id="cd24138">
    <property type="entry name" value="TtcA-like"/>
    <property type="match status" value="1"/>
</dbReference>
<dbReference type="Gene3D" id="3.40.50.620">
    <property type="entry name" value="HUPs"/>
    <property type="match status" value="1"/>
</dbReference>
<dbReference type="HAMAP" id="MF_01850">
    <property type="entry name" value="TtcA"/>
    <property type="match status" value="1"/>
</dbReference>
<dbReference type="InterPro" id="IPR014729">
    <property type="entry name" value="Rossmann-like_a/b/a_fold"/>
</dbReference>
<dbReference type="InterPro" id="IPR011063">
    <property type="entry name" value="TilS/TtcA_N"/>
</dbReference>
<dbReference type="InterPro" id="IPR012089">
    <property type="entry name" value="tRNA_Cyd_32_2_STrfase"/>
</dbReference>
<dbReference type="InterPro" id="IPR035107">
    <property type="entry name" value="tRNA_thiolation_TtcA_Ctu1"/>
</dbReference>
<dbReference type="NCBIfam" id="NF007972">
    <property type="entry name" value="PRK10696.1"/>
    <property type="match status" value="1"/>
</dbReference>
<dbReference type="PANTHER" id="PTHR43686:SF1">
    <property type="entry name" value="AMINOTRAN_5 DOMAIN-CONTAINING PROTEIN"/>
    <property type="match status" value="1"/>
</dbReference>
<dbReference type="PANTHER" id="PTHR43686">
    <property type="entry name" value="SULFURTRANSFERASE-RELATED"/>
    <property type="match status" value="1"/>
</dbReference>
<dbReference type="Pfam" id="PF01171">
    <property type="entry name" value="ATP_bind_3"/>
    <property type="match status" value="1"/>
</dbReference>
<dbReference type="PIRSF" id="PIRSF004976">
    <property type="entry name" value="ATPase_YdaO"/>
    <property type="match status" value="1"/>
</dbReference>
<dbReference type="SUPFAM" id="SSF52402">
    <property type="entry name" value="Adenine nucleotide alpha hydrolases-like"/>
    <property type="match status" value="1"/>
</dbReference>
<name>TTCA_PSEPK</name>
<sequence>MGTLSVNQNKLQKRLRRLAGEAITDYNMIEDGDKVMVCLSGGKDSYTMLDVLLHLQKVAPITFEIVAVNMDQKQPGFPEHVLPAYLKELGVEYHIVEKDTYSVVKELVPEGKTTCSLCSRLRRGTLYTFADEIGATKMALGHHRDDIVETFFLNMFFNGALKGMPPKLRADDGRNVVIRPLAYCSERDIQAYSDMKAFPIIPCNLCGSQENLQRQVVKDMLVEWERKHPGRTESIFRALQNVAPSQLADRNLFDFTSLKIDENATPRFLDVLNI</sequence>
<gene>
    <name evidence="1" type="primary">ttcA</name>
    <name type="ordered locus">PP_1641</name>
</gene>
<comment type="function">
    <text evidence="1">Catalyzes the ATP-dependent 2-thiolation of cytidine in position 32 of tRNA, to form 2-thiocytidine (s(2)C32). The sulfur atoms are provided by the cysteine/cysteine desulfurase (IscS) system.</text>
</comment>
<comment type="catalytic activity">
    <reaction evidence="1">
        <text>cytidine(32) in tRNA + S-sulfanyl-L-cysteinyl-[cysteine desulfurase] + AH2 + ATP = 2-thiocytidine(32) in tRNA + L-cysteinyl-[cysteine desulfurase] + A + AMP + diphosphate + H(+)</text>
        <dbReference type="Rhea" id="RHEA:57048"/>
        <dbReference type="Rhea" id="RHEA-COMP:10288"/>
        <dbReference type="Rhea" id="RHEA-COMP:12157"/>
        <dbReference type="Rhea" id="RHEA-COMP:12158"/>
        <dbReference type="Rhea" id="RHEA-COMP:14821"/>
        <dbReference type="ChEBI" id="CHEBI:13193"/>
        <dbReference type="ChEBI" id="CHEBI:15378"/>
        <dbReference type="ChEBI" id="CHEBI:17499"/>
        <dbReference type="ChEBI" id="CHEBI:29950"/>
        <dbReference type="ChEBI" id="CHEBI:30616"/>
        <dbReference type="ChEBI" id="CHEBI:33019"/>
        <dbReference type="ChEBI" id="CHEBI:61963"/>
        <dbReference type="ChEBI" id="CHEBI:82748"/>
        <dbReference type="ChEBI" id="CHEBI:141453"/>
        <dbReference type="ChEBI" id="CHEBI:456215"/>
    </reaction>
    <physiologicalReaction direction="left-to-right" evidence="1">
        <dbReference type="Rhea" id="RHEA:57049"/>
    </physiologicalReaction>
</comment>
<comment type="cofactor">
    <cofactor evidence="1">
        <name>Mg(2+)</name>
        <dbReference type="ChEBI" id="CHEBI:18420"/>
    </cofactor>
</comment>
<comment type="cofactor">
    <cofactor evidence="1">
        <name>[4Fe-4S] cluster</name>
        <dbReference type="ChEBI" id="CHEBI:49883"/>
    </cofactor>
    <text evidence="1">Binds 1 [4Fe-4S] cluster per subunit. The cluster is chelated by three Cys residues, the fourth Fe has a free coordination site that may bind a sulfur atom transferred from the persulfide of IscS.</text>
</comment>
<comment type="pathway">
    <text evidence="1">tRNA modification.</text>
</comment>
<comment type="subunit">
    <text evidence="1">Homodimer.</text>
</comment>
<comment type="subcellular location">
    <subcellularLocation>
        <location evidence="1">Cytoplasm</location>
    </subcellularLocation>
</comment>
<comment type="miscellaneous">
    <text evidence="1">The thiolation reaction likely consists of two steps: a first activation step by ATP to form an adenylated intermediate of the target base of tRNA, and a second nucleophilic substitution step of the sulfur (S) atom supplied by the hydrosulfide attached to the Fe-S cluster.</text>
</comment>
<comment type="similarity">
    <text evidence="1">Belongs to the TtcA family.</text>
</comment>
<reference key="1">
    <citation type="journal article" date="2002" name="Environ. Microbiol.">
        <title>Complete genome sequence and comparative analysis of the metabolically versatile Pseudomonas putida KT2440.</title>
        <authorList>
            <person name="Nelson K.E."/>
            <person name="Weinel C."/>
            <person name="Paulsen I.T."/>
            <person name="Dodson R.J."/>
            <person name="Hilbert H."/>
            <person name="Martins dos Santos V.A.P."/>
            <person name="Fouts D.E."/>
            <person name="Gill S.R."/>
            <person name="Pop M."/>
            <person name="Holmes M."/>
            <person name="Brinkac L.M."/>
            <person name="Beanan M.J."/>
            <person name="DeBoy R.T."/>
            <person name="Daugherty S.C."/>
            <person name="Kolonay J.F."/>
            <person name="Madupu R."/>
            <person name="Nelson W.C."/>
            <person name="White O."/>
            <person name="Peterson J.D."/>
            <person name="Khouri H.M."/>
            <person name="Hance I."/>
            <person name="Chris Lee P."/>
            <person name="Holtzapple E.K."/>
            <person name="Scanlan D."/>
            <person name="Tran K."/>
            <person name="Moazzez A."/>
            <person name="Utterback T.R."/>
            <person name="Rizzo M."/>
            <person name="Lee K."/>
            <person name="Kosack D."/>
            <person name="Moestl D."/>
            <person name="Wedler H."/>
            <person name="Lauber J."/>
            <person name="Stjepandic D."/>
            <person name="Hoheisel J."/>
            <person name="Straetz M."/>
            <person name="Heim S."/>
            <person name="Kiewitz C."/>
            <person name="Eisen J.A."/>
            <person name="Timmis K.N."/>
            <person name="Duesterhoeft A."/>
            <person name="Tuemmler B."/>
            <person name="Fraser C.M."/>
        </authorList>
    </citation>
    <scope>NUCLEOTIDE SEQUENCE [LARGE SCALE GENOMIC DNA]</scope>
    <source>
        <strain>ATCC 47054 / DSM 6125 / CFBP 8728 / NCIMB 11950 / KT2440</strain>
    </source>
</reference>
<organism>
    <name type="scientific">Pseudomonas putida (strain ATCC 47054 / DSM 6125 / CFBP 8728 / NCIMB 11950 / KT2440)</name>
    <dbReference type="NCBI Taxonomy" id="160488"/>
    <lineage>
        <taxon>Bacteria</taxon>
        <taxon>Pseudomonadati</taxon>
        <taxon>Pseudomonadota</taxon>
        <taxon>Gammaproteobacteria</taxon>
        <taxon>Pseudomonadales</taxon>
        <taxon>Pseudomonadaceae</taxon>
        <taxon>Pseudomonas</taxon>
    </lineage>
</organism>
<accession>Q88MD2</accession>